<keyword id="KW-0175">Coiled coil</keyword>
<keyword id="KW-0256">Endoplasmic reticulum</keyword>
<keyword id="KW-0342">GTP-binding</keyword>
<keyword id="KW-0378">Hydrolase</keyword>
<keyword id="KW-0472">Membrane</keyword>
<keyword id="KW-0547">Nucleotide-binding</keyword>
<keyword id="KW-1185">Reference proteome</keyword>
<keyword id="KW-0812">Transmembrane</keyword>
<keyword id="KW-1133">Transmembrane helix</keyword>
<reference key="1">
    <citation type="journal article" date="2007" name="Nat. Biotechnol.">
        <title>Genome sequencing and analysis of the versatile cell factory Aspergillus niger CBS 513.88.</title>
        <authorList>
            <person name="Pel H.J."/>
            <person name="de Winde J.H."/>
            <person name="Archer D.B."/>
            <person name="Dyer P.S."/>
            <person name="Hofmann G."/>
            <person name="Schaap P.J."/>
            <person name="Turner G."/>
            <person name="de Vries R.P."/>
            <person name="Albang R."/>
            <person name="Albermann K."/>
            <person name="Andersen M.R."/>
            <person name="Bendtsen J.D."/>
            <person name="Benen J.A.E."/>
            <person name="van den Berg M."/>
            <person name="Breestraat S."/>
            <person name="Caddick M.X."/>
            <person name="Contreras R."/>
            <person name="Cornell M."/>
            <person name="Coutinho P.M."/>
            <person name="Danchin E.G.J."/>
            <person name="Debets A.J.M."/>
            <person name="Dekker P."/>
            <person name="van Dijck P.W.M."/>
            <person name="van Dijk A."/>
            <person name="Dijkhuizen L."/>
            <person name="Driessen A.J.M."/>
            <person name="d'Enfert C."/>
            <person name="Geysens S."/>
            <person name="Goosen C."/>
            <person name="Groot G.S.P."/>
            <person name="de Groot P.W.J."/>
            <person name="Guillemette T."/>
            <person name="Henrissat B."/>
            <person name="Herweijer M."/>
            <person name="van den Hombergh J.P.T.W."/>
            <person name="van den Hondel C.A.M.J.J."/>
            <person name="van der Heijden R.T.J.M."/>
            <person name="van der Kaaij R.M."/>
            <person name="Klis F.M."/>
            <person name="Kools H.J."/>
            <person name="Kubicek C.P."/>
            <person name="van Kuyk P.A."/>
            <person name="Lauber J."/>
            <person name="Lu X."/>
            <person name="van der Maarel M.J.E.C."/>
            <person name="Meulenberg R."/>
            <person name="Menke H."/>
            <person name="Mortimer M.A."/>
            <person name="Nielsen J."/>
            <person name="Oliver S.G."/>
            <person name="Olsthoorn M."/>
            <person name="Pal K."/>
            <person name="van Peij N.N.M.E."/>
            <person name="Ram A.F.J."/>
            <person name="Rinas U."/>
            <person name="Roubos J.A."/>
            <person name="Sagt C.M.J."/>
            <person name="Schmoll M."/>
            <person name="Sun J."/>
            <person name="Ussery D."/>
            <person name="Varga J."/>
            <person name="Vervecken W."/>
            <person name="van de Vondervoort P.J.J."/>
            <person name="Wedler H."/>
            <person name="Woesten H.A.B."/>
            <person name="Zeng A.-P."/>
            <person name="van Ooyen A.J.J."/>
            <person name="Visser J."/>
            <person name="Stam H."/>
        </authorList>
    </citation>
    <scope>NUCLEOTIDE SEQUENCE [LARGE SCALE GENOMIC DNA]</scope>
    <source>
        <strain>ATCC MYA-4892 / CBS 513.88 / FGSC A1513</strain>
    </source>
</reference>
<proteinExistence type="inferred from homology"/>
<gene>
    <name type="primary">sey1</name>
    <name type="ORF">An08g04480</name>
</gene>
<comment type="function">
    <text evidence="1">Cooperates with the reticulon proteins and tubule-shaping DP1 family proteins to generate and maintain the structure of the tubular endoplasmic reticulum network. Has GTPase activity, which is required for its function in ER organization.</text>
</comment>
<comment type="subcellular location">
    <subcellularLocation>
        <location evidence="1">Endoplasmic reticulum membrane</location>
        <topology evidence="1">Multi-pass membrane protein</topology>
    </subcellularLocation>
    <text evidence="1">Enriched in the cortical ER. Concentrated in punctae along the ER tubules.</text>
</comment>
<comment type="similarity">
    <text evidence="2">Belongs to the TRAFAC class dynamin-like GTPase superfamily. GB1/RHD3 GTPase family. RHD3 subfamily.</text>
</comment>
<accession>A2QR20</accession>
<dbReference type="EC" id="3.6.5.-" evidence="1"/>
<dbReference type="EMBL" id="AM270168">
    <property type="protein sequence ID" value="CAK45421.1"/>
    <property type="molecule type" value="Genomic_DNA"/>
</dbReference>
<dbReference type="RefSeq" id="XP_001392566.1">
    <property type="nucleotide sequence ID" value="XM_001392529.2"/>
</dbReference>
<dbReference type="SMR" id="A2QR20"/>
<dbReference type="EnsemblFungi" id="CAK45421">
    <property type="protein sequence ID" value="CAK45421"/>
    <property type="gene ID" value="An08g04480"/>
</dbReference>
<dbReference type="GeneID" id="4982765"/>
<dbReference type="KEGG" id="ang:An08g04480"/>
<dbReference type="VEuPathDB" id="FungiDB:An08g04480"/>
<dbReference type="HOGENOM" id="CLU_011270_0_0_1"/>
<dbReference type="Proteomes" id="UP000006706">
    <property type="component" value="Chromosome 8R"/>
</dbReference>
<dbReference type="GO" id="GO:0005789">
    <property type="term" value="C:endoplasmic reticulum membrane"/>
    <property type="evidence" value="ECO:0007669"/>
    <property type="project" value="UniProtKB-SubCell"/>
</dbReference>
<dbReference type="GO" id="GO:0005525">
    <property type="term" value="F:GTP binding"/>
    <property type="evidence" value="ECO:0007669"/>
    <property type="project" value="UniProtKB-UniRule"/>
</dbReference>
<dbReference type="GO" id="GO:0003924">
    <property type="term" value="F:GTPase activity"/>
    <property type="evidence" value="ECO:0007669"/>
    <property type="project" value="UniProtKB-UniRule"/>
</dbReference>
<dbReference type="GO" id="GO:0016320">
    <property type="term" value="P:endoplasmic reticulum membrane fusion"/>
    <property type="evidence" value="ECO:0007669"/>
    <property type="project" value="TreeGrafter"/>
</dbReference>
<dbReference type="CDD" id="cd01851">
    <property type="entry name" value="GBP"/>
    <property type="match status" value="1"/>
</dbReference>
<dbReference type="FunFam" id="3.40.50.300:FF:000727">
    <property type="entry name" value="Protein SEY1 homolog"/>
    <property type="match status" value="1"/>
</dbReference>
<dbReference type="Gene3D" id="3.40.50.300">
    <property type="entry name" value="P-loop containing nucleotide triphosphate hydrolases"/>
    <property type="match status" value="1"/>
</dbReference>
<dbReference type="HAMAP" id="MF_03109">
    <property type="entry name" value="Sey1"/>
    <property type="match status" value="1"/>
</dbReference>
<dbReference type="InterPro" id="IPR030386">
    <property type="entry name" value="G_GB1_RHD3_dom"/>
</dbReference>
<dbReference type="InterPro" id="IPR027417">
    <property type="entry name" value="P-loop_NTPase"/>
</dbReference>
<dbReference type="InterPro" id="IPR008803">
    <property type="entry name" value="RHD3/Sey1"/>
</dbReference>
<dbReference type="InterPro" id="IPR046758">
    <property type="entry name" value="Sey1/RHD3-like_3HB"/>
</dbReference>
<dbReference type="PANTHER" id="PTHR45923">
    <property type="entry name" value="PROTEIN SEY1"/>
    <property type="match status" value="1"/>
</dbReference>
<dbReference type="PANTHER" id="PTHR45923:SF2">
    <property type="entry name" value="PROTEIN SEY1"/>
    <property type="match status" value="1"/>
</dbReference>
<dbReference type="Pfam" id="PF05879">
    <property type="entry name" value="RHD3_GTPase"/>
    <property type="match status" value="1"/>
</dbReference>
<dbReference type="Pfam" id="PF20428">
    <property type="entry name" value="Sey1_3HB"/>
    <property type="match status" value="1"/>
</dbReference>
<dbReference type="SUPFAM" id="SSF52540">
    <property type="entry name" value="P-loop containing nucleoside triphosphate hydrolases"/>
    <property type="match status" value="1"/>
</dbReference>
<dbReference type="PROSITE" id="PS51715">
    <property type="entry name" value="G_GB1_RHD3"/>
    <property type="match status" value="1"/>
</dbReference>
<organism>
    <name type="scientific">Aspergillus niger (strain ATCC MYA-4892 / CBS 513.88 / FGSC A1513)</name>
    <dbReference type="NCBI Taxonomy" id="425011"/>
    <lineage>
        <taxon>Eukaryota</taxon>
        <taxon>Fungi</taxon>
        <taxon>Dikarya</taxon>
        <taxon>Ascomycota</taxon>
        <taxon>Pezizomycotina</taxon>
        <taxon>Eurotiomycetes</taxon>
        <taxon>Eurotiomycetidae</taxon>
        <taxon>Eurotiales</taxon>
        <taxon>Aspergillaceae</taxon>
        <taxon>Aspergillus</taxon>
        <taxon>Aspergillus subgen. Circumdati</taxon>
    </lineage>
</organism>
<feature type="chain" id="PRO_0000384972" description="Protein sey1">
    <location>
        <begin position="1"/>
        <end position="858"/>
    </location>
</feature>
<feature type="topological domain" description="Cytoplasmic" evidence="1">
    <location>
        <begin position="1"/>
        <end position="742"/>
    </location>
</feature>
<feature type="transmembrane region" description="Helical" evidence="1">
    <location>
        <begin position="743"/>
        <end position="763"/>
    </location>
</feature>
<feature type="topological domain" description="Lumenal" evidence="1">
    <location>
        <begin position="764"/>
        <end position="766"/>
    </location>
</feature>
<feature type="transmembrane region" description="Helical" evidence="1">
    <location>
        <begin position="767"/>
        <end position="787"/>
    </location>
</feature>
<feature type="topological domain" description="Cytoplasmic" evidence="1">
    <location>
        <begin position="788"/>
        <end position="858"/>
    </location>
</feature>
<feature type="domain" description="GB1/RHD3-type G" evidence="2">
    <location>
        <begin position="50"/>
        <end position="300"/>
    </location>
</feature>
<feature type="region of interest" description="Disordered" evidence="3">
    <location>
        <begin position="669"/>
        <end position="696"/>
    </location>
</feature>
<feature type="region of interest" description="Disordered" evidence="3">
    <location>
        <begin position="825"/>
        <end position="858"/>
    </location>
</feature>
<feature type="coiled-coil region" evidence="1">
    <location>
        <begin position="475"/>
        <end position="504"/>
    </location>
</feature>
<feature type="compositionally biased region" description="Acidic residues" evidence="3">
    <location>
        <begin position="683"/>
        <end position="696"/>
    </location>
</feature>
<feature type="binding site" evidence="1">
    <location>
        <begin position="60"/>
        <end position="67"/>
    </location>
    <ligand>
        <name>GTP</name>
        <dbReference type="ChEBI" id="CHEBI:37565"/>
    </ligand>
</feature>
<sequence length="858" mass="96379">MATNGHFAAIGNGSSDKTAYEHGVQVIDENKEFNANLSKYLTLEDVTPAGFNYHLISVFGSQSTGKSTLLNHLFGTQFSVMSELERRQTTKGIWMSKNKNGGDSSMADNILVMDVEGTDGRERGEDQDFERKSALFALATSEVLIVNIWEHQVGLYQGANMGLLKTVFEVNMQLFLKDRATSHRSLLFFVIRDFVGNTPLQNLQRTLMEDMSRLWDSISKPAGLEHSSVHDYFDFQFYGLPHKSYQPEQFVAETKKLSLRFREGQKDPSLDARKGEFSDGGVFLPEYHRRIPADGFSHYAEGIWDQIVNNKDLDLPTQQELLAQFRCDEILREVMVAFDEAIVPFEDKQSQAARLGEPEILGGLGAAMRASRSKAFKSFETEASRYHKGVYQRKRAELESKIDTRLKALFQGQLDATHKSGITEFSEAVSGAVKAGQKKGTGYDFAEIVNEEVTKAVQKFKEVAHETAVEGAAWSDSQQQLALYEKELAEVSARLRREEMRRLASRVERWVQSRLGESVGLEFNALGSGRAGGGAPEEGEKPTEKKFWDRVWNVFVETVLDAERRFTDRASSFDASLEEVDVGLWRLRRKSWGVLRAKIDEEMVEGNLLLKLRENFEDKFRYDDAGVPRIWRPTDDIEGIYTRARESTLTLIPLLSRFRLAETSAPPPLDRWVGHTPSSATAADEEDLPPIGGVDEEEGKSLEEEMTILSESKRQELTVRFKKAADGVYVEAKRSAIGGMTQVPLYFYGILLALGWNEIVAVLRNPAYFFLLFVCLVAGYVTYQLNLWGPIMKMTEAASNQALVEGKKRLREFLESSDTGRQAIAMSTAGGAGRGEQVEMSRLNKQGKTTAEDEDGDL</sequence>
<evidence type="ECO:0000255" key="1">
    <source>
        <dbReference type="HAMAP-Rule" id="MF_03109"/>
    </source>
</evidence>
<evidence type="ECO:0000255" key="2">
    <source>
        <dbReference type="PROSITE-ProRule" id="PRU01052"/>
    </source>
</evidence>
<evidence type="ECO:0000256" key="3">
    <source>
        <dbReference type="SAM" id="MobiDB-lite"/>
    </source>
</evidence>
<name>SEY1_ASPNC</name>
<protein>
    <recommendedName>
        <fullName evidence="1">Protein sey1</fullName>
        <ecNumber evidence="1">3.6.5.-</ecNumber>
    </recommendedName>
</protein>